<comment type="function">
    <text evidence="1">The RuvA-RuvB-RuvC complex processes Holliday junction (HJ) DNA during genetic recombination and DNA repair, while the RuvA-RuvB complex plays an important role in the rescue of blocked DNA replication forks via replication fork reversal (RFR). RuvA specifically binds to HJ cruciform DNA, conferring on it an open structure. The RuvB hexamer acts as an ATP-dependent pump, pulling dsDNA into and through the RuvAB complex. RuvB forms 2 homohexamers on either side of HJ DNA bound by 1 or 2 RuvA tetramers; 4 subunits per hexamer contact DNA at a time. Coordinated motions by a converter formed by DNA-disengaged RuvB subunits stimulates ATP hydrolysis and nucleotide exchange. Immobilization of the converter enables RuvB to convert the ATP-contained energy into a lever motion, pulling 2 nucleotides of DNA out of the RuvA tetramer per ATP hydrolyzed, thus driving DNA branch migration. The RuvB motors rotate together with the DNA substrate, which together with the progressing nucleotide cycle form the mechanistic basis for DNA recombination by continuous HJ branch migration. Branch migration allows RuvC to scan DNA until it finds its consensus sequence, where it cleaves and resolves cruciform DNA.</text>
</comment>
<comment type="catalytic activity">
    <reaction evidence="1">
        <text>ATP + H2O = ADP + phosphate + H(+)</text>
        <dbReference type="Rhea" id="RHEA:13065"/>
        <dbReference type="ChEBI" id="CHEBI:15377"/>
        <dbReference type="ChEBI" id="CHEBI:15378"/>
        <dbReference type="ChEBI" id="CHEBI:30616"/>
        <dbReference type="ChEBI" id="CHEBI:43474"/>
        <dbReference type="ChEBI" id="CHEBI:456216"/>
    </reaction>
</comment>
<comment type="subunit">
    <text evidence="1">Homohexamer. Forms an RuvA(8)-RuvB(12)-Holliday junction (HJ) complex. HJ DNA is sandwiched between 2 RuvA tetramers; dsDNA enters through RuvA and exits via RuvB. An RuvB hexamer assembles on each DNA strand where it exits the tetramer. Each RuvB hexamer is contacted by two RuvA subunits (via domain III) on 2 adjacent RuvB subunits; this complex drives branch migration. In the full resolvosome a probable DNA-RuvA(4)-RuvB(12)-RuvC(2) complex forms which resolves the HJ.</text>
</comment>
<comment type="subcellular location">
    <subcellularLocation>
        <location evidence="1">Cytoplasm</location>
    </subcellularLocation>
</comment>
<comment type="domain">
    <text evidence="1">Has 3 domains, the large (RuvB-L) and small ATPase (RuvB-S) domains and the C-terminal head (RuvB-H) domain. The head domain binds DNA, while the ATPase domains jointly bind ATP, ADP or are empty depending on the state of the subunit in the translocation cycle. During a single DNA translocation step the structure of each domain remains the same, but their relative positions change.</text>
</comment>
<comment type="similarity">
    <text evidence="1">Belongs to the RuvB family.</text>
</comment>
<gene>
    <name evidence="1" type="primary">ruvB</name>
    <name type="ordered locus">spr0238</name>
</gene>
<accession>Q8CWU7</accession>
<name>RUVB_STRR6</name>
<evidence type="ECO:0000255" key="1">
    <source>
        <dbReference type="HAMAP-Rule" id="MF_00016"/>
    </source>
</evidence>
<protein>
    <recommendedName>
        <fullName evidence="1">Holliday junction branch migration complex subunit RuvB</fullName>
        <ecNumber evidence="1">3.6.4.-</ecNumber>
    </recommendedName>
</protein>
<reference key="1">
    <citation type="journal article" date="2001" name="J. Bacteriol.">
        <title>Genome of the bacterium Streptococcus pneumoniae strain R6.</title>
        <authorList>
            <person name="Hoskins J."/>
            <person name="Alborn W.E. Jr."/>
            <person name="Arnold J."/>
            <person name="Blaszczak L.C."/>
            <person name="Burgett S."/>
            <person name="DeHoff B.S."/>
            <person name="Estrem S.T."/>
            <person name="Fritz L."/>
            <person name="Fu D.-J."/>
            <person name="Fuller W."/>
            <person name="Geringer C."/>
            <person name="Gilmour R."/>
            <person name="Glass J.S."/>
            <person name="Khoja H."/>
            <person name="Kraft A.R."/>
            <person name="Lagace R.E."/>
            <person name="LeBlanc D.J."/>
            <person name="Lee L.N."/>
            <person name="Lefkowitz E.J."/>
            <person name="Lu J."/>
            <person name="Matsushima P."/>
            <person name="McAhren S.M."/>
            <person name="McHenney M."/>
            <person name="McLeaster K."/>
            <person name="Mundy C.W."/>
            <person name="Nicas T.I."/>
            <person name="Norris F.H."/>
            <person name="O'Gara M."/>
            <person name="Peery R.B."/>
            <person name="Robertson G.T."/>
            <person name="Rockey P."/>
            <person name="Sun P.-M."/>
            <person name="Winkler M.E."/>
            <person name="Yang Y."/>
            <person name="Young-Bellido M."/>
            <person name="Zhao G."/>
            <person name="Zook C.A."/>
            <person name="Baltz R.H."/>
            <person name="Jaskunas S.R."/>
            <person name="Rosteck P.R. Jr."/>
            <person name="Skatrud P.L."/>
            <person name="Glass J.I."/>
        </authorList>
    </citation>
    <scope>NUCLEOTIDE SEQUENCE [LARGE SCALE GENOMIC DNA]</scope>
    <source>
        <strain>ATCC BAA-255 / R6</strain>
    </source>
</reference>
<feature type="chain" id="PRO_0000165608" description="Holliday junction branch migration complex subunit RuvB">
    <location>
        <begin position="1"/>
        <end position="332"/>
    </location>
</feature>
<feature type="region of interest" description="Large ATPase domain (RuvB-L)" evidence="1">
    <location>
        <begin position="1"/>
        <end position="181"/>
    </location>
</feature>
<feature type="region of interest" description="Small ATPAse domain (RuvB-S)" evidence="1">
    <location>
        <begin position="182"/>
        <end position="252"/>
    </location>
</feature>
<feature type="region of interest" description="Head domain (RuvB-H)" evidence="1">
    <location>
        <begin position="255"/>
        <end position="332"/>
    </location>
</feature>
<feature type="binding site" evidence="1">
    <location>
        <position position="20"/>
    </location>
    <ligand>
        <name>ATP</name>
        <dbReference type="ChEBI" id="CHEBI:30616"/>
    </ligand>
</feature>
<feature type="binding site" evidence="1">
    <location>
        <position position="21"/>
    </location>
    <ligand>
        <name>ATP</name>
        <dbReference type="ChEBI" id="CHEBI:30616"/>
    </ligand>
</feature>
<feature type="binding site" evidence="1">
    <location>
        <position position="62"/>
    </location>
    <ligand>
        <name>ATP</name>
        <dbReference type="ChEBI" id="CHEBI:30616"/>
    </ligand>
</feature>
<feature type="binding site" evidence="1">
    <location>
        <position position="65"/>
    </location>
    <ligand>
        <name>ATP</name>
        <dbReference type="ChEBI" id="CHEBI:30616"/>
    </ligand>
</feature>
<feature type="binding site" evidence="1">
    <location>
        <position position="66"/>
    </location>
    <ligand>
        <name>ATP</name>
        <dbReference type="ChEBI" id="CHEBI:30616"/>
    </ligand>
</feature>
<feature type="binding site" evidence="1">
    <location>
        <position position="66"/>
    </location>
    <ligand>
        <name>Mg(2+)</name>
        <dbReference type="ChEBI" id="CHEBI:18420"/>
    </ligand>
</feature>
<feature type="binding site" evidence="1">
    <location>
        <position position="67"/>
    </location>
    <ligand>
        <name>ATP</name>
        <dbReference type="ChEBI" id="CHEBI:30616"/>
    </ligand>
</feature>
<feature type="binding site" evidence="1">
    <location>
        <begin position="128"/>
        <end position="130"/>
    </location>
    <ligand>
        <name>ATP</name>
        <dbReference type="ChEBI" id="CHEBI:30616"/>
    </ligand>
</feature>
<feature type="binding site" evidence="1">
    <location>
        <position position="171"/>
    </location>
    <ligand>
        <name>ATP</name>
        <dbReference type="ChEBI" id="CHEBI:30616"/>
    </ligand>
</feature>
<feature type="binding site" evidence="1">
    <location>
        <position position="181"/>
    </location>
    <ligand>
        <name>ATP</name>
        <dbReference type="ChEBI" id="CHEBI:30616"/>
    </ligand>
</feature>
<feature type="binding site" evidence="1">
    <location>
        <position position="218"/>
    </location>
    <ligand>
        <name>ATP</name>
        <dbReference type="ChEBI" id="CHEBI:30616"/>
    </ligand>
</feature>
<feature type="binding site" evidence="1">
    <location>
        <position position="291"/>
    </location>
    <ligand>
        <name>DNA</name>
        <dbReference type="ChEBI" id="CHEBI:16991"/>
    </ligand>
</feature>
<feature type="binding site" evidence="1">
    <location>
        <position position="310"/>
    </location>
    <ligand>
        <name>DNA</name>
        <dbReference type="ChEBI" id="CHEBI:16991"/>
    </ligand>
</feature>
<feature type="binding site" evidence="1">
    <location>
        <position position="312"/>
    </location>
    <ligand>
        <name>DNA</name>
        <dbReference type="ChEBI" id="CHEBI:16991"/>
    </ligand>
</feature>
<feature type="binding site" evidence="1">
    <location>
        <position position="315"/>
    </location>
    <ligand>
        <name>DNA</name>
        <dbReference type="ChEBI" id="CHEBI:16991"/>
    </ligand>
</feature>
<proteinExistence type="inferred from homology"/>
<dbReference type="EC" id="3.6.4.-" evidence="1"/>
<dbReference type="EMBL" id="AE007317">
    <property type="protein sequence ID" value="AAK99042.1"/>
    <property type="molecule type" value="Genomic_DNA"/>
</dbReference>
<dbReference type="PIR" id="F97901">
    <property type="entry name" value="F97901"/>
</dbReference>
<dbReference type="RefSeq" id="NP_357832.1">
    <property type="nucleotide sequence ID" value="NC_003098.1"/>
</dbReference>
<dbReference type="RefSeq" id="WP_001809468.1">
    <property type="nucleotide sequence ID" value="NC_003098.1"/>
</dbReference>
<dbReference type="SMR" id="Q8CWU7"/>
<dbReference type="STRING" id="171101.spr0238"/>
<dbReference type="GeneID" id="45652263"/>
<dbReference type="KEGG" id="spr:spr0238"/>
<dbReference type="PATRIC" id="fig|171101.6.peg.272"/>
<dbReference type="eggNOG" id="COG2255">
    <property type="taxonomic scope" value="Bacteria"/>
</dbReference>
<dbReference type="HOGENOM" id="CLU_055599_1_0_9"/>
<dbReference type="Proteomes" id="UP000000586">
    <property type="component" value="Chromosome"/>
</dbReference>
<dbReference type="GO" id="GO:0005737">
    <property type="term" value="C:cytoplasm"/>
    <property type="evidence" value="ECO:0007669"/>
    <property type="project" value="UniProtKB-SubCell"/>
</dbReference>
<dbReference type="GO" id="GO:0048476">
    <property type="term" value="C:Holliday junction resolvase complex"/>
    <property type="evidence" value="ECO:0007669"/>
    <property type="project" value="UniProtKB-UniRule"/>
</dbReference>
<dbReference type="GO" id="GO:0005524">
    <property type="term" value="F:ATP binding"/>
    <property type="evidence" value="ECO:0007669"/>
    <property type="project" value="UniProtKB-UniRule"/>
</dbReference>
<dbReference type="GO" id="GO:0016887">
    <property type="term" value="F:ATP hydrolysis activity"/>
    <property type="evidence" value="ECO:0007669"/>
    <property type="project" value="InterPro"/>
</dbReference>
<dbReference type="GO" id="GO:0000400">
    <property type="term" value="F:four-way junction DNA binding"/>
    <property type="evidence" value="ECO:0007669"/>
    <property type="project" value="UniProtKB-UniRule"/>
</dbReference>
<dbReference type="GO" id="GO:0009378">
    <property type="term" value="F:four-way junction helicase activity"/>
    <property type="evidence" value="ECO:0007669"/>
    <property type="project" value="InterPro"/>
</dbReference>
<dbReference type="GO" id="GO:0006310">
    <property type="term" value="P:DNA recombination"/>
    <property type="evidence" value="ECO:0007669"/>
    <property type="project" value="UniProtKB-UniRule"/>
</dbReference>
<dbReference type="GO" id="GO:0006281">
    <property type="term" value="P:DNA repair"/>
    <property type="evidence" value="ECO:0007669"/>
    <property type="project" value="UniProtKB-UniRule"/>
</dbReference>
<dbReference type="CDD" id="cd00009">
    <property type="entry name" value="AAA"/>
    <property type="match status" value="1"/>
</dbReference>
<dbReference type="Gene3D" id="1.10.8.60">
    <property type="match status" value="1"/>
</dbReference>
<dbReference type="Gene3D" id="3.40.50.300">
    <property type="entry name" value="P-loop containing nucleotide triphosphate hydrolases"/>
    <property type="match status" value="1"/>
</dbReference>
<dbReference type="Gene3D" id="1.10.10.10">
    <property type="entry name" value="Winged helix-like DNA-binding domain superfamily/Winged helix DNA-binding domain"/>
    <property type="match status" value="1"/>
</dbReference>
<dbReference type="HAMAP" id="MF_00016">
    <property type="entry name" value="DNA_HJ_migration_RuvB"/>
    <property type="match status" value="1"/>
</dbReference>
<dbReference type="InterPro" id="IPR003593">
    <property type="entry name" value="AAA+_ATPase"/>
</dbReference>
<dbReference type="InterPro" id="IPR041445">
    <property type="entry name" value="AAA_lid_4"/>
</dbReference>
<dbReference type="InterPro" id="IPR004605">
    <property type="entry name" value="DNA_helicase_Holl-junc_RuvB"/>
</dbReference>
<dbReference type="InterPro" id="IPR027417">
    <property type="entry name" value="P-loop_NTPase"/>
</dbReference>
<dbReference type="InterPro" id="IPR008824">
    <property type="entry name" value="RuvB-like_N"/>
</dbReference>
<dbReference type="InterPro" id="IPR008823">
    <property type="entry name" value="RuvB_C"/>
</dbReference>
<dbReference type="InterPro" id="IPR036388">
    <property type="entry name" value="WH-like_DNA-bd_sf"/>
</dbReference>
<dbReference type="InterPro" id="IPR036390">
    <property type="entry name" value="WH_DNA-bd_sf"/>
</dbReference>
<dbReference type="NCBIfam" id="NF000868">
    <property type="entry name" value="PRK00080.1"/>
    <property type="match status" value="1"/>
</dbReference>
<dbReference type="NCBIfam" id="TIGR00635">
    <property type="entry name" value="ruvB"/>
    <property type="match status" value="1"/>
</dbReference>
<dbReference type="PANTHER" id="PTHR42848">
    <property type="match status" value="1"/>
</dbReference>
<dbReference type="PANTHER" id="PTHR42848:SF1">
    <property type="entry name" value="HOLLIDAY JUNCTION BRANCH MIGRATION COMPLEX SUBUNIT RUVB"/>
    <property type="match status" value="1"/>
</dbReference>
<dbReference type="Pfam" id="PF17864">
    <property type="entry name" value="AAA_lid_4"/>
    <property type="match status" value="1"/>
</dbReference>
<dbReference type="Pfam" id="PF05491">
    <property type="entry name" value="RuvB_C"/>
    <property type="match status" value="1"/>
</dbReference>
<dbReference type="Pfam" id="PF05496">
    <property type="entry name" value="RuvB_N"/>
    <property type="match status" value="1"/>
</dbReference>
<dbReference type="SMART" id="SM00382">
    <property type="entry name" value="AAA"/>
    <property type="match status" value="1"/>
</dbReference>
<dbReference type="SUPFAM" id="SSF52540">
    <property type="entry name" value="P-loop containing nucleoside triphosphate hydrolases"/>
    <property type="match status" value="1"/>
</dbReference>
<dbReference type="SUPFAM" id="SSF46785">
    <property type="entry name" value="Winged helix' DNA-binding domain"/>
    <property type="match status" value="1"/>
</dbReference>
<keyword id="KW-0067">ATP-binding</keyword>
<keyword id="KW-0963">Cytoplasm</keyword>
<keyword id="KW-0227">DNA damage</keyword>
<keyword id="KW-0233">DNA recombination</keyword>
<keyword id="KW-0234">DNA repair</keyword>
<keyword id="KW-0238">DNA-binding</keyword>
<keyword id="KW-0378">Hydrolase</keyword>
<keyword id="KW-0547">Nucleotide-binding</keyword>
<keyword id="KW-1185">Reference proteome</keyword>
<organism>
    <name type="scientific">Streptococcus pneumoniae (strain ATCC BAA-255 / R6)</name>
    <dbReference type="NCBI Taxonomy" id="171101"/>
    <lineage>
        <taxon>Bacteria</taxon>
        <taxon>Bacillati</taxon>
        <taxon>Bacillota</taxon>
        <taxon>Bacilli</taxon>
        <taxon>Lactobacillales</taxon>
        <taxon>Streptococcaceae</taxon>
        <taxon>Streptococcus</taxon>
    </lineage>
</organism>
<sequence>MSRILDNEIMGDEELVERTLRPQYLREYIGQDKVKDQLQIFIEAAKMRDEALDHVLLFGPPGLGKTTMAFVIANELGVNLKQTSGPVIEKAGDLVAILNELEPGDVLFIDEIHRLPMSVEEVLYSAMEDFYIDIMIGAGEGSRSVHLELPPFTLIGATTRAGMLSNPLRARFGITGHMEYYAHADLTEIVERTADIFEMEITHEAASELALRSRGTPRIANRLLKRVRDFAQIMGNGVIDDIITDKALTMLDVDHEGLDYVDQKILRTMIEMYSGGPVGLGTLSVNIAEERETVEDMYEPYLIQKGFIMRTRSGRVATAKAYEHLGYEYSEK</sequence>